<keyword id="KW-0028">Amino-acid biosynthesis</keyword>
<keyword id="KW-0963">Cytoplasm</keyword>
<keyword id="KW-0413">Isomerase</keyword>
<keyword id="KW-0457">Lysine biosynthesis</keyword>
<keyword id="KW-1185">Reference proteome</keyword>
<reference key="1">
    <citation type="journal article" date="2001" name="Science">
        <title>Comparative genomics of Listeria species.</title>
        <authorList>
            <person name="Glaser P."/>
            <person name="Frangeul L."/>
            <person name="Buchrieser C."/>
            <person name="Rusniok C."/>
            <person name="Amend A."/>
            <person name="Baquero F."/>
            <person name="Berche P."/>
            <person name="Bloecker H."/>
            <person name="Brandt P."/>
            <person name="Chakraborty T."/>
            <person name="Charbit A."/>
            <person name="Chetouani F."/>
            <person name="Couve E."/>
            <person name="de Daruvar A."/>
            <person name="Dehoux P."/>
            <person name="Domann E."/>
            <person name="Dominguez-Bernal G."/>
            <person name="Duchaud E."/>
            <person name="Durant L."/>
            <person name="Dussurget O."/>
            <person name="Entian K.-D."/>
            <person name="Fsihi H."/>
            <person name="Garcia-del Portillo F."/>
            <person name="Garrido P."/>
            <person name="Gautier L."/>
            <person name="Goebel W."/>
            <person name="Gomez-Lopez N."/>
            <person name="Hain T."/>
            <person name="Hauf J."/>
            <person name="Jackson D."/>
            <person name="Jones L.-M."/>
            <person name="Kaerst U."/>
            <person name="Kreft J."/>
            <person name="Kuhn M."/>
            <person name="Kunst F."/>
            <person name="Kurapkat G."/>
            <person name="Madueno E."/>
            <person name="Maitournam A."/>
            <person name="Mata Vicente J."/>
            <person name="Ng E."/>
            <person name="Nedjari H."/>
            <person name="Nordsiek G."/>
            <person name="Novella S."/>
            <person name="de Pablos B."/>
            <person name="Perez-Diaz J.-C."/>
            <person name="Purcell R."/>
            <person name="Remmel B."/>
            <person name="Rose M."/>
            <person name="Schlueter T."/>
            <person name="Simoes N."/>
            <person name="Tierrez A."/>
            <person name="Vazquez-Boland J.-A."/>
            <person name="Voss H."/>
            <person name="Wehland J."/>
            <person name="Cossart P."/>
        </authorList>
    </citation>
    <scope>NUCLEOTIDE SEQUENCE [LARGE SCALE GENOMIC DNA]</scope>
    <source>
        <strain>ATCC BAA-679 / EGD-e</strain>
    </source>
</reference>
<organism>
    <name type="scientific">Listeria monocytogenes serovar 1/2a (strain ATCC BAA-679 / EGD-e)</name>
    <dbReference type="NCBI Taxonomy" id="169963"/>
    <lineage>
        <taxon>Bacteria</taxon>
        <taxon>Bacillati</taxon>
        <taxon>Bacillota</taxon>
        <taxon>Bacilli</taxon>
        <taxon>Bacillales</taxon>
        <taxon>Listeriaceae</taxon>
        <taxon>Listeria</taxon>
    </lineage>
</organism>
<protein>
    <recommendedName>
        <fullName evidence="1">Diaminopimelate epimerase</fullName>
        <shortName evidence="1">DAP epimerase</shortName>
        <ecNumber evidence="1">5.1.1.7</ecNumber>
    </recommendedName>
    <alternativeName>
        <fullName evidence="1">PLP-independent amino acid racemase</fullName>
    </alternativeName>
</protein>
<evidence type="ECO:0000255" key="1">
    <source>
        <dbReference type="HAMAP-Rule" id="MF_00197"/>
    </source>
</evidence>
<sequence>MATIHFTKVHGSQNDFFLVDEEGNQIMDWSDAKRADFAIKLCDREHSLGGADGILYVTKSSEAGPIGQMRVVNSDGSIASMCGNGLRTVARYLLEKHALTEAKVETMKAILDVKKATSLGFDIPTYQVEISPVKFNAESLPMNVGVEKLFNQVVPELDAELAFSAVSVPNPHLITFVDQTVLDSDRQETLASYLNSENPYFPDGVNVSFVKRLSDDAIYVRTFERGVGFTNACGTAMSACSLIKKMLDKDTFETPLNVYNDGGRVQVTAKKDEAGDISLQLIGNATFVSTGSVSYESDTVTELTNEATPEQAQYQELVKEVKEFLKTTE</sequence>
<accession>Q8Y5N9</accession>
<proteinExistence type="inferred from homology"/>
<gene>
    <name evidence="1" type="primary">dapF</name>
    <name type="ordered locus">lmo2018</name>
</gene>
<feature type="chain" id="PRO_0000149851" description="Diaminopimelate epimerase">
    <location>
        <begin position="1"/>
        <end position="329"/>
    </location>
</feature>
<feature type="active site" description="Proton donor" evidence="1">
    <location>
        <position position="82"/>
    </location>
</feature>
<feature type="active site" description="Proton acceptor" evidence="1">
    <location>
        <position position="233"/>
    </location>
</feature>
<feature type="binding site" evidence="1">
    <location>
        <position position="14"/>
    </location>
    <ligand>
        <name>substrate</name>
    </ligand>
</feature>
<feature type="binding site" evidence="1">
    <location>
        <position position="73"/>
    </location>
    <ligand>
        <name>substrate</name>
    </ligand>
</feature>
<feature type="binding site" evidence="1">
    <location>
        <begin position="83"/>
        <end position="84"/>
    </location>
    <ligand>
        <name>substrate</name>
    </ligand>
</feature>
<feature type="binding site" evidence="1">
    <location>
        <position position="170"/>
    </location>
    <ligand>
        <name>substrate</name>
    </ligand>
</feature>
<feature type="binding site" evidence="1">
    <location>
        <position position="206"/>
    </location>
    <ligand>
        <name>substrate</name>
    </ligand>
</feature>
<feature type="binding site" evidence="1">
    <location>
        <begin position="224"/>
        <end position="225"/>
    </location>
    <ligand>
        <name>substrate</name>
    </ligand>
</feature>
<feature type="binding site" evidence="1">
    <location>
        <begin position="234"/>
        <end position="235"/>
    </location>
    <ligand>
        <name>substrate</name>
    </ligand>
</feature>
<feature type="site" description="Could be important to modulate the pK values of the two catalytic cysteine residues" evidence="1">
    <location>
        <position position="172"/>
    </location>
</feature>
<feature type="site" description="Could be important to modulate the pK values of the two catalytic cysteine residues" evidence="1">
    <location>
        <position position="224"/>
    </location>
</feature>
<name>DAPF_LISMO</name>
<comment type="function">
    <text evidence="1">Catalyzes the stereoinversion of LL-2,6-diaminopimelate (L,L-DAP) to meso-diaminopimelate (meso-DAP), a precursor of L-lysine and an essential component of the bacterial peptidoglycan.</text>
</comment>
<comment type="catalytic activity">
    <reaction evidence="1">
        <text>(2S,6S)-2,6-diaminopimelate = meso-2,6-diaminopimelate</text>
        <dbReference type="Rhea" id="RHEA:15393"/>
        <dbReference type="ChEBI" id="CHEBI:57609"/>
        <dbReference type="ChEBI" id="CHEBI:57791"/>
        <dbReference type="EC" id="5.1.1.7"/>
    </reaction>
</comment>
<comment type="pathway">
    <text evidence="1">Amino-acid biosynthesis; L-lysine biosynthesis via DAP pathway; DL-2,6-diaminopimelate from LL-2,6-diaminopimelate: step 1/1.</text>
</comment>
<comment type="subunit">
    <text evidence="1">Homodimer.</text>
</comment>
<comment type="subcellular location">
    <subcellularLocation>
        <location evidence="1">Cytoplasm</location>
    </subcellularLocation>
</comment>
<comment type="similarity">
    <text evidence="1">Belongs to the diaminopimelate epimerase family.</text>
</comment>
<dbReference type="EC" id="5.1.1.7" evidence="1"/>
<dbReference type="EMBL" id="AL591981">
    <property type="protein sequence ID" value="CAD00096.1"/>
    <property type="molecule type" value="Genomic_DNA"/>
</dbReference>
<dbReference type="PIR" id="AB1327">
    <property type="entry name" value="AB1327"/>
</dbReference>
<dbReference type="RefSeq" id="NP_465542.1">
    <property type="nucleotide sequence ID" value="NC_003210.1"/>
</dbReference>
<dbReference type="RefSeq" id="WP_010989871.1">
    <property type="nucleotide sequence ID" value="NZ_CP149495.1"/>
</dbReference>
<dbReference type="SMR" id="Q8Y5N9"/>
<dbReference type="STRING" id="169963.gene:17594703"/>
<dbReference type="PaxDb" id="169963-lmo2018"/>
<dbReference type="EnsemblBacteria" id="CAD00096">
    <property type="protein sequence ID" value="CAD00096"/>
    <property type="gene ID" value="CAD00096"/>
</dbReference>
<dbReference type="GeneID" id="985823"/>
<dbReference type="KEGG" id="lmo:lmo2018"/>
<dbReference type="PATRIC" id="fig|169963.11.peg.2066"/>
<dbReference type="eggNOG" id="COG0253">
    <property type="taxonomic scope" value="Bacteria"/>
</dbReference>
<dbReference type="HOGENOM" id="CLU_053306_3_1_9"/>
<dbReference type="OrthoDB" id="9805408at2"/>
<dbReference type="PhylomeDB" id="Q8Y5N9"/>
<dbReference type="BioCyc" id="LMON169963:LMO2018-MONOMER"/>
<dbReference type="UniPathway" id="UPA00034">
    <property type="reaction ID" value="UER00025"/>
</dbReference>
<dbReference type="Proteomes" id="UP000000817">
    <property type="component" value="Chromosome"/>
</dbReference>
<dbReference type="GO" id="GO:0005829">
    <property type="term" value="C:cytosol"/>
    <property type="evidence" value="ECO:0000318"/>
    <property type="project" value="GO_Central"/>
</dbReference>
<dbReference type="GO" id="GO:0008837">
    <property type="term" value="F:diaminopimelate epimerase activity"/>
    <property type="evidence" value="ECO:0000318"/>
    <property type="project" value="GO_Central"/>
</dbReference>
<dbReference type="GO" id="GO:0009089">
    <property type="term" value="P:lysine biosynthetic process via diaminopimelate"/>
    <property type="evidence" value="ECO:0000318"/>
    <property type="project" value="GO_Central"/>
</dbReference>
<dbReference type="FunFam" id="3.10.310.10:FF:000021">
    <property type="entry name" value="Diaminopimelate epimerase"/>
    <property type="match status" value="1"/>
</dbReference>
<dbReference type="Gene3D" id="3.10.310.10">
    <property type="entry name" value="Diaminopimelate Epimerase, Chain A, domain 1"/>
    <property type="match status" value="2"/>
</dbReference>
<dbReference type="HAMAP" id="MF_00197">
    <property type="entry name" value="DAP_epimerase"/>
    <property type="match status" value="1"/>
</dbReference>
<dbReference type="InterPro" id="IPR018510">
    <property type="entry name" value="DAP_epimerase_AS"/>
</dbReference>
<dbReference type="InterPro" id="IPR001653">
    <property type="entry name" value="DAP_epimerase_DapF"/>
</dbReference>
<dbReference type="NCBIfam" id="TIGR00652">
    <property type="entry name" value="DapF"/>
    <property type="match status" value="1"/>
</dbReference>
<dbReference type="PANTHER" id="PTHR31689:SF0">
    <property type="entry name" value="DIAMINOPIMELATE EPIMERASE"/>
    <property type="match status" value="1"/>
</dbReference>
<dbReference type="PANTHER" id="PTHR31689">
    <property type="entry name" value="DIAMINOPIMELATE EPIMERASE, CHLOROPLASTIC"/>
    <property type="match status" value="1"/>
</dbReference>
<dbReference type="Pfam" id="PF01678">
    <property type="entry name" value="DAP_epimerase"/>
    <property type="match status" value="2"/>
</dbReference>
<dbReference type="SUPFAM" id="SSF54506">
    <property type="entry name" value="Diaminopimelate epimerase-like"/>
    <property type="match status" value="2"/>
</dbReference>
<dbReference type="PROSITE" id="PS01326">
    <property type="entry name" value="DAP_EPIMERASE"/>
    <property type="match status" value="1"/>
</dbReference>